<reference key="1">
    <citation type="journal article" date="2006" name="Genome Res.">
        <title>Massive genome erosion and functional adaptations provide insights into the symbiotic lifestyle of Sodalis glossinidius in the tsetse host.</title>
        <authorList>
            <person name="Toh H."/>
            <person name="Weiss B.L."/>
            <person name="Perkin S.A.H."/>
            <person name="Yamashita A."/>
            <person name="Oshima K."/>
            <person name="Hattori M."/>
            <person name="Aksoy S."/>
        </authorList>
    </citation>
    <scope>NUCLEOTIDE SEQUENCE [LARGE SCALE GENOMIC DNA]</scope>
    <source>
        <strain>morsitans</strain>
    </source>
</reference>
<evidence type="ECO:0000255" key="1">
    <source>
        <dbReference type="HAMAP-Rule" id="MF_00744"/>
    </source>
</evidence>
<proteinExistence type="inferred from homology"/>
<accession>Q2NQY6</accession>
<comment type="function">
    <text evidence="1">This regulatory protein, when combined with SAM (S-adenosylmethionine) represses the expression of the methionine regulon and of enzymes involved in SAM synthesis.</text>
</comment>
<comment type="subunit">
    <text evidence="1">Homodimer.</text>
</comment>
<comment type="subcellular location">
    <subcellularLocation>
        <location evidence="1">Cytoplasm</location>
    </subcellularLocation>
</comment>
<comment type="domain">
    <text>Does not bind DNA by a helix-turn-helix motif.</text>
</comment>
<comment type="similarity">
    <text evidence="1">Belongs to the MetJ family.</text>
</comment>
<feature type="chain" id="PRO_1000046499" description="Met repressor">
    <location>
        <begin position="1"/>
        <end position="105"/>
    </location>
</feature>
<name>METJ_SODGM</name>
<organism>
    <name type="scientific">Sodalis glossinidius (strain morsitans)</name>
    <dbReference type="NCBI Taxonomy" id="343509"/>
    <lineage>
        <taxon>Bacteria</taxon>
        <taxon>Pseudomonadati</taxon>
        <taxon>Pseudomonadota</taxon>
        <taxon>Gammaproteobacteria</taxon>
        <taxon>Enterobacterales</taxon>
        <taxon>Bruguierivoracaceae</taxon>
        <taxon>Sodalis</taxon>
    </lineage>
</organism>
<protein>
    <recommendedName>
        <fullName evidence="1">Met repressor</fullName>
    </recommendedName>
    <alternativeName>
        <fullName evidence="1">Met regulon regulatory protein MetJ</fullName>
    </alternativeName>
</protein>
<gene>
    <name evidence="1" type="primary">metJ</name>
    <name type="ordered locus">SG2164</name>
</gene>
<dbReference type="EMBL" id="AP008232">
    <property type="protein sequence ID" value="BAE75439.1"/>
    <property type="molecule type" value="Genomic_DNA"/>
</dbReference>
<dbReference type="RefSeq" id="WP_011411976.1">
    <property type="nucleotide sequence ID" value="NZ_LN854557.1"/>
</dbReference>
<dbReference type="SMR" id="Q2NQY6"/>
<dbReference type="STRING" id="343509.SG2164"/>
<dbReference type="KEGG" id="sgl:SG2164"/>
<dbReference type="eggNOG" id="COG3060">
    <property type="taxonomic scope" value="Bacteria"/>
</dbReference>
<dbReference type="HOGENOM" id="CLU_142318_0_0_6"/>
<dbReference type="OrthoDB" id="5680896at2"/>
<dbReference type="BioCyc" id="SGLO343509:SGP1_RS19980-MONOMER"/>
<dbReference type="Proteomes" id="UP000001932">
    <property type="component" value="Chromosome"/>
</dbReference>
<dbReference type="GO" id="GO:0005737">
    <property type="term" value="C:cytoplasm"/>
    <property type="evidence" value="ECO:0007669"/>
    <property type="project" value="UniProtKB-SubCell"/>
</dbReference>
<dbReference type="GO" id="GO:0003677">
    <property type="term" value="F:DNA binding"/>
    <property type="evidence" value="ECO:0007669"/>
    <property type="project" value="UniProtKB-KW"/>
</dbReference>
<dbReference type="GO" id="GO:0003700">
    <property type="term" value="F:DNA-binding transcription factor activity"/>
    <property type="evidence" value="ECO:0007669"/>
    <property type="project" value="InterPro"/>
</dbReference>
<dbReference type="GO" id="GO:0009086">
    <property type="term" value="P:methionine biosynthetic process"/>
    <property type="evidence" value="ECO:0007669"/>
    <property type="project" value="UniProtKB-UniRule"/>
</dbReference>
<dbReference type="GO" id="GO:0045892">
    <property type="term" value="P:negative regulation of DNA-templated transcription"/>
    <property type="evidence" value="ECO:0007669"/>
    <property type="project" value="UniProtKB-UniRule"/>
</dbReference>
<dbReference type="CDD" id="cd00490">
    <property type="entry name" value="Met_repressor_MetJ"/>
    <property type="match status" value="1"/>
</dbReference>
<dbReference type="FunFam" id="1.10.140.10:FF:000001">
    <property type="entry name" value="Met repressor"/>
    <property type="match status" value="1"/>
</dbReference>
<dbReference type="Gene3D" id="1.10.140.10">
    <property type="entry name" value="MET Apo-Repressor, subunit A"/>
    <property type="match status" value="1"/>
</dbReference>
<dbReference type="HAMAP" id="MF_00744">
    <property type="entry name" value="MetJ"/>
    <property type="match status" value="1"/>
</dbReference>
<dbReference type="InterPro" id="IPR002084">
    <property type="entry name" value="Met_repressor_MetJ"/>
</dbReference>
<dbReference type="InterPro" id="IPR023453">
    <property type="entry name" value="Met_repressor_MetJ_dom_sf"/>
</dbReference>
<dbReference type="InterPro" id="IPR010985">
    <property type="entry name" value="Ribbon_hlx_hlx"/>
</dbReference>
<dbReference type="NCBIfam" id="NF003622">
    <property type="entry name" value="PRK05264.1"/>
    <property type="match status" value="1"/>
</dbReference>
<dbReference type="Pfam" id="PF01340">
    <property type="entry name" value="MetJ"/>
    <property type="match status" value="1"/>
</dbReference>
<dbReference type="SUPFAM" id="SSF47598">
    <property type="entry name" value="Ribbon-helix-helix"/>
    <property type="match status" value="1"/>
</dbReference>
<sequence>MAEWKGEYVSPYAEHGKKSEQVKKITVSIPLKVLKILTDERTRRQVNNLRHATNSELLCEAFLHAFTGQPLPDDHDLRKERNDEIPEVAKDMMREMGIDPDTWEY</sequence>
<keyword id="KW-0028">Amino-acid biosynthesis</keyword>
<keyword id="KW-0963">Cytoplasm</keyword>
<keyword id="KW-0238">DNA-binding</keyword>
<keyword id="KW-0486">Methionine biosynthesis</keyword>
<keyword id="KW-0678">Repressor</keyword>
<keyword id="KW-0804">Transcription</keyword>
<keyword id="KW-0805">Transcription regulation</keyword>